<accession>Q32PN7</accession>
<protein>
    <recommendedName>
        <fullName evidence="7">Cilium assembly protein DZIP1L</fullName>
    </recommendedName>
    <alternativeName>
        <fullName>DAZ-interacting zinc finger protein 1-like</fullName>
    </alternativeName>
</protein>
<sequence>MLGQFSPGEPYTTSLSSTPPWSPANQFQLFRFRSRTEPIDWRRLSTLDVDRVARDMDVSVLQDFIMTVTFCALEGERCPNCRGPVDPSLVKLLRMSQLSTEYLLQCQDFLSSQLAGLEERLQAATSLVQQGEGQRAELEKSLQETKQENRRRKQLIATQQLLLQASANNYHKCQFCEKSFVNYSYLQAHVQRRHPEVTDAEKQKKRKVEEMEDGIEELKEKLRLTQMQLQEEQQADNLRRQQEQEQQRRREQSEKEALERWKEDERRKFNQEIADLRQLFLQESKEMASKSSSIEAKLLVLQNKEMAGFNNASLQQDSDPEKEMRENRERELRERIARKKSEWRRKFQEAQKRHQQENKELKSENSRLLKALSVEKNSTSSVQKLQQQVVSLSSQLSQKDRLIKSQEEKIKKLSATPVPVSVVSLNDQDSSEEPVEQDRDSQEDSDEPQWKAPKIRKGKPALMRESKPILEESLEQKLENMGLRKGTKGISKQTFKSLSSLLAGQRLQKFRQQTNLQSLRDSLTLEVTRRVKSLQKSSGKPTPNTLKQRGKKTSTPLNEKSLRFRQDSKASDRREKSQQPKTLLPTPTPRSKAPPPNQTPKILAKKNSTPPFSSDEESVEDTAYITSSRGNLSSSVRVVQSGSLLNPTTEPDWTDSELSEDLDLPKIYKTCNPQGSVVQTLTRSLERQLSTPIKTPVGGTRVLPPSSTTPRPAIVKQQALSGEESDSELSSIEELTGRRAGGHKSLEVDRTSGTSA</sequence>
<keyword id="KW-0966">Cell projection</keyword>
<keyword id="KW-0969">Cilium</keyword>
<keyword id="KW-0175">Coiled coil</keyword>
<keyword id="KW-0963">Cytoplasm</keyword>
<keyword id="KW-0206">Cytoskeleton</keyword>
<keyword id="KW-0479">Metal-binding</keyword>
<keyword id="KW-1185">Reference proteome</keyword>
<keyword id="KW-0862">Zinc</keyword>
<keyword id="KW-0863">Zinc-finger</keyword>
<reference key="1">
    <citation type="submission" date="2005-10" db="EMBL/GenBank/DDBJ databases">
        <authorList>
            <consortium name="NIH - Zebrafish Gene Collection (ZGC) project"/>
        </authorList>
    </citation>
    <scope>NUCLEOTIDE SEQUENCE [LARGE SCALE MRNA]</scope>
    <source>
        <tissue>Olfactory epithelium</tissue>
    </source>
</reference>
<reference key="2">
    <citation type="journal article" date="2017" name="Nat. Genet.">
        <title>Mutations in DZIP1L, which encodes a ciliary-transition-zone protein, cause autosomal recessive polycystic kidney disease.</title>
        <authorList>
            <person name="Lu H."/>
            <person name="Galeano M.C.R."/>
            <person name="Ott E."/>
            <person name="Kaeslin G."/>
            <person name="Kausalya P.J."/>
            <person name="Kramer C."/>
            <person name="Ortiz-Bruechle N."/>
            <person name="Hilger N."/>
            <person name="Metzis V."/>
            <person name="Hiersche M."/>
            <person name="Tay S.Y."/>
            <person name="Tunningley R."/>
            <person name="Vij S."/>
            <person name="Courtney A.D."/>
            <person name="Whittle B."/>
            <person name="Wuehl E."/>
            <person name="Vester U."/>
            <person name="Hartleben B."/>
            <person name="Neuber S."/>
            <person name="Frank V."/>
            <person name="Little M.H."/>
            <person name="Epting D."/>
            <person name="Papathanasiou P."/>
            <person name="Perkins A.C."/>
            <person name="Wright G.D."/>
            <person name="Hunziker W."/>
            <person name="Gee H.Y."/>
            <person name="Otto E.A."/>
            <person name="Zerres K."/>
            <person name="Hildebrandt F."/>
            <person name="Roy S."/>
            <person name="Wicking C."/>
            <person name="Bergmann C."/>
        </authorList>
    </citation>
    <scope>FUNCTION</scope>
    <scope>DISRUPTION PHENOTYPE</scope>
    <scope>DEVELOPMENTAL STAGE</scope>
</reference>
<name>DZI1L_DANRE</name>
<gene>
    <name type="primary">dzip1l</name>
    <name type="ORF">zgc:123017</name>
</gene>
<dbReference type="EMBL" id="BC108046">
    <property type="protein sequence ID" value="AAI08047.1"/>
    <property type="molecule type" value="mRNA"/>
</dbReference>
<dbReference type="RefSeq" id="NP_001032304.1">
    <property type="nucleotide sequence ID" value="NM_001037227.1"/>
</dbReference>
<dbReference type="SMR" id="Q32PN7"/>
<dbReference type="FunCoup" id="Q32PN7">
    <property type="interactions" value="15"/>
</dbReference>
<dbReference type="STRING" id="7955.ENSDARP00000103743"/>
<dbReference type="PaxDb" id="7955-ENSDARP00000103743"/>
<dbReference type="PeptideAtlas" id="Q32PN7"/>
<dbReference type="GeneID" id="553313"/>
<dbReference type="KEGG" id="dre:553313"/>
<dbReference type="AGR" id="ZFIN:ZDB-GENE-051113-196"/>
<dbReference type="CTD" id="199221"/>
<dbReference type="ZFIN" id="ZDB-GENE-051113-196">
    <property type="gene designation" value="dzip1l"/>
</dbReference>
<dbReference type="eggNOG" id="ENOG502QRAI">
    <property type="taxonomic scope" value="Eukaryota"/>
</dbReference>
<dbReference type="InParanoid" id="Q32PN7"/>
<dbReference type="OrthoDB" id="515971at2759"/>
<dbReference type="PhylomeDB" id="Q32PN7"/>
<dbReference type="PRO" id="PR:Q32PN7"/>
<dbReference type="Proteomes" id="UP000000437">
    <property type="component" value="Chromosome 6"/>
</dbReference>
<dbReference type="GO" id="GO:0005814">
    <property type="term" value="C:centriole"/>
    <property type="evidence" value="ECO:0000250"/>
    <property type="project" value="UniProtKB"/>
</dbReference>
<dbReference type="GO" id="GO:0036064">
    <property type="term" value="C:ciliary basal body"/>
    <property type="evidence" value="ECO:0000250"/>
    <property type="project" value="UniProtKB"/>
</dbReference>
<dbReference type="GO" id="GO:0005737">
    <property type="term" value="C:cytoplasm"/>
    <property type="evidence" value="ECO:0000318"/>
    <property type="project" value="GO_Central"/>
</dbReference>
<dbReference type="GO" id="GO:0008270">
    <property type="term" value="F:zinc ion binding"/>
    <property type="evidence" value="ECO:0007669"/>
    <property type="project" value="UniProtKB-KW"/>
</dbReference>
<dbReference type="GO" id="GO:0060271">
    <property type="term" value="P:cilium assembly"/>
    <property type="evidence" value="ECO:0000315"/>
    <property type="project" value="ZFIN"/>
</dbReference>
<dbReference type="GO" id="GO:0032880">
    <property type="term" value="P:regulation of protein localization"/>
    <property type="evidence" value="ECO:0000250"/>
    <property type="project" value="UniProtKB"/>
</dbReference>
<dbReference type="Gene3D" id="3.30.160.60">
    <property type="entry name" value="Classic Zinc Finger"/>
    <property type="match status" value="1"/>
</dbReference>
<dbReference type="InterPro" id="IPR032714">
    <property type="entry name" value="DZIP1_N"/>
</dbReference>
<dbReference type="InterPro" id="IPR051241">
    <property type="entry name" value="DZIP_RILPL"/>
</dbReference>
<dbReference type="InterPro" id="IPR013087">
    <property type="entry name" value="Znf_C2H2_type"/>
</dbReference>
<dbReference type="PANTHER" id="PTHR21502:SF8">
    <property type="entry name" value="CILIUM ASSEMBLY PROTEIN DZIP1L"/>
    <property type="match status" value="1"/>
</dbReference>
<dbReference type="PANTHER" id="PTHR21502">
    <property type="entry name" value="ZINC FINGER PROTEIN DZIP1"/>
    <property type="match status" value="1"/>
</dbReference>
<dbReference type="Pfam" id="PF13815">
    <property type="entry name" value="Dzip-like_N"/>
    <property type="match status" value="1"/>
</dbReference>
<dbReference type="SMART" id="SM00355">
    <property type="entry name" value="ZnF_C2H2"/>
    <property type="match status" value="1"/>
</dbReference>
<dbReference type="PROSITE" id="PS00028">
    <property type="entry name" value="ZINC_FINGER_C2H2_1"/>
    <property type="match status" value="1"/>
</dbReference>
<dbReference type="PROSITE" id="PS50157">
    <property type="entry name" value="ZINC_FINGER_C2H2_2"/>
    <property type="match status" value="1"/>
</dbReference>
<feature type="chain" id="PRO_0000331309" description="Cilium assembly protein DZIP1L">
    <location>
        <begin position="1"/>
        <end position="756"/>
    </location>
</feature>
<feature type="zinc finger region" description="C2H2-type" evidence="3">
    <location>
        <begin position="171"/>
        <end position="194"/>
    </location>
</feature>
<feature type="region of interest" description="Disordered" evidence="4">
    <location>
        <begin position="1"/>
        <end position="20"/>
    </location>
</feature>
<feature type="region of interest" description="Disordered" evidence="4">
    <location>
        <begin position="193"/>
        <end position="212"/>
    </location>
</feature>
<feature type="region of interest" description="Disordered" evidence="4">
    <location>
        <begin position="233"/>
        <end position="262"/>
    </location>
</feature>
<feature type="region of interest" description="Disordered" evidence="4">
    <location>
        <begin position="310"/>
        <end position="365"/>
    </location>
</feature>
<feature type="region of interest" description="Disordered" evidence="4">
    <location>
        <begin position="409"/>
        <end position="466"/>
    </location>
</feature>
<feature type="region of interest" description="Disordered" evidence="4">
    <location>
        <begin position="531"/>
        <end position="626"/>
    </location>
</feature>
<feature type="region of interest" description="Disordered" evidence="4">
    <location>
        <begin position="693"/>
        <end position="756"/>
    </location>
</feature>
<feature type="coiled-coil region" evidence="2">
    <location>
        <begin position="108"/>
        <end position="158"/>
    </location>
</feature>
<feature type="coiled-coil region" evidence="2">
    <location>
        <begin position="196"/>
        <end position="283"/>
    </location>
</feature>
<feature type="coiled-coil region" evidence="2">
    <location>
        <begin position="321"/>
        <end position="416"/>
    </location>
</feature>
<feature type="compositionally biased region" description="Low complexity" evidence="4">
    <location>
        <begin position="10"/>
        <end position="19"/>
    </location>
</feature>
<feature type="compositionally biased region" description="Basic and acidic residues" evidence="4">
    <location>
        <begin position="193"/>
        <end position="202"/>
    </location>
</feature>
<feature type="compositionally biased region" description="Basic and acidic residues" evidence="4">
    <location>
        <begin position="237"/>
        <end position="262"/>
    </location>
</feature>
<feature type="compositionally biased region" description="Basic and acidic residues" evidence="4">
    <location>
        <begin position="319"/>
        <end position="335"/>
    </location>
</feature>
<feature type="compositionally biased region" description="Basic and acidic residues" evidence="4">
    <location>
        <begin position="344"/>
        <end position="365"/>
    </location>
</feature>
<feature type="compositionally biased region" description="Polar residues" evidence="4">
    <location>
        <begin position="534"/>
        <end position="558"/>
    </location>
</feature>
<feature type="compositionally biased region" description="Basic and acidic residues" evidence="4">
    <location>
        <begin position="560"/>
        <end position="578"/>
    </location>
</feature>
<feature type="compositionally biased region" description="Pro residues" evidence="4">
    <location>
        <begin position="586"/>
        <end position="598"/>
    </location>
</feature>
<evidence type="ECO:0000250" key="1">
    <source>
        <dbReference type="UniProtKB" id="Q8IYY4"/>
    </source>
</evidence>
<evidence type="ECO:0000255" key="2"/>
<evidence type="ECO:0000255" key="3">
    <source>
        <dbReference type="PROSITE-ProRule" id="PRU00042"/>
    </source>
</evidence>
<evidence type="ECO:0000256" key="4">
    <source>
        <dbReference type="SAM" id="MobiDB-lite"/>
    </source>
</evidence>
<evidence type="ECO:0000269" key="5">
    <source>
    </source>
</evidence>
<evidence type="ECO:0000305" key="6"/>
<evidence type="ECO:0000305" key="7">
    <source>
    </source>
</evidence>
<organism>
    <name type="scientific">Danio rerio</name>
    <name type="common">Zebrafish</name>
    <name type="synonym">Brachydanio rerio</name>
    <dbReference type="NCBI Taxonomy" id="7955"/>
    <lineage>
        <taxon>Eukaryota</taxon>
        <taxon>Metazoa</taxon>
        <taxon>Chordata</taxon>
        <taxon>Craniata</taxon>
        <taxon>Vertebrata</taxon>
        <taxon>Euteleostomi</taxon>
        <taxon>Actinopterygii</taxon>
        <taxon>Neopterygii</taxon>
        <taxon>Teleostei</taxon>
        <taxon>Ostariophysi</taxon>
        <taxon>Cypriniformes</taxon>
        <taxon>Danionidae</taxon>
        <taxon>Danioninae</taxon>
        <taxon>Danio</taxon>
    </lineage>
</organism>
<proteinExistence type="evidence at transcript level"/>
<comment type="function">
    <text evidence="1 7">Involved in primary cilium formation (PubMed:28530676). Probably acts as a transition zone protein required for localization of PKD1/PC1 and PKD2/PC2 to the ciliary membrane.</text>
</comment>
<comment type="subcellular location">
    <subcellularLocation>
        <location evidence="1">Cytoplasm</location>
        <location evidence="1">Cytoskeleton</location>
        <location evidence="1">Cilium basal body</location>
    </subcellularLocation>
    <subcellularLocation>
        <location evidence="1">Cytoplasm</location>
        <location evidence="1">Cytoskeleton</location>
        <location evidence="1">Microtubule organizing center</location>
        <location evidence="1">Centrosome</location>
        <location evidence="1">Centriole</location>
    </subcellularLocation>
    <text evidence="1">Localizes to centrioles and to the distal ends of basal bodies.</text>
</comment>
<comment type="developmental stage">
    <text evidence="5">Maternally expressed. Ubiquitously expressed in embryos at 1 day post-fertilization (dpf), with a more discrete accumulation in the embryonic kidneys. In developing kidney, expressed in the midsections of the pronephric ducts, in a pattern consistent with the multiciliated cells.</text>
</comment>
<comment type="disruption phenotype">
    <text evidence="5">Embryos show defects in otolith formation in the inner ear, but no other overt morphological changes.</text>
</comment>
<comment type="similarity">
    <text evidence="6">Belongs to the DZIP C2H2-type zinc-finger protein family.</text>
</comment>